<sequence>MLTTDSDPIVAIATAPGRGGIGVVRISFGRAGEAAAQPLMQALTGQTLAARRASYVPFLDASGDALDRGIALYFPAPHSYTGEHVLELQGHGGPVVLQLVLQRCIDAGRAFGLRLAEPGEFTRRAFLNDKLDLAQAEAVADLIEASTEAAARSAGRSLDGAFSRDIHALVEDVITLRMLVEATLDFPEEEIDFLEAADARGKLARIRERLGHVLSEARQGALLREGLSVVLAGQPNVGKSSLLNALAGAELAIVTPIAGTTRDKVAQTIQIEGIPLHVIDTAGLRDTEDEVEKIGIARTWNEIERADVVLHLLDARTGMTVEDEAIAGRFPAGVPVVRVLNKTDLTGLAPATRALDADLDLSEVRLSAKQGDGVALLREELLRIAGWQAGAESVYLARERHLIALRAAEEHLATAAAHADQNSQALDLFAEELRLAQDQLNSITGEFSSDDLLGVIFSRFCIGK</sequence>
<accession>Q13SH7</accession>
<name>MNME_PARXL</name>
<comment type="function">
    <text evidence="1">Exhibits a very high intrinsic GTPase hydrolysis rate. Involved in the addition of a carboxymethylaminomethyl (cmnm) group at the wobble position (U34) of certain tRNAs, forming tRNA-cmnm(5)s(2)U34.</text>
</comment>
<comment type="cofactor">
    <cofactor evidence="1">
        <name>K(+)</name>
        <dbReference type="ChEBI" id="CHEBI:29103"/>
    </cofactor>
    <text evidence="1">Binds 1 potassium ion per subunit.</text>
</comment>
<comment type="subunit">
    <text evidence="1">Homodimer. Heterotetramer of two MnmE and two MnmG subunits.</text>
</comment>
<comment type="subcellular location">
    <subcellularLocation>
        <location evidence="1">Cytoplasm</location>
    </subcellularLocation>
</comment>
<comment type="similarity">
    <text evidence="1">Belongs to the TRAFAC class TrmE-Era-EngA-EngB-Septin-like GTPase superfamily. TrmE GTPase family.</text>
</comment>
<evidence type="ECO:0000255" key="1">
    <source>
        <dbReference type="HAMAP-Rule" id="MF_00379"/>
    </source>
</evidence>
<proteinExistence type="inferred from homology"/>
<organism>
    <name type="scientific">Paraburkholderia xenovorans (strain LB400)</name>
    <dbReference type="NCBI Taxonomy" id="266265"/>
    <lineage>
        <taxon>Bacteria</taxon>
        <taxon>Pseudomonadati</taxon>
        <taxon>Pseudomonadota</taxon>
        <taxon>Betaproteobacteria</taxon>
        <taxon>Burkholderiales</taxon>
        <taxon>Burkholderiaceae</taxon>
        <taxon>Paraburkholderia</taxon>
    </lineage>
</organism>
<keyword id="KW-0963">Cytoplasm</keyword>
<keyword id="KW-0342">GTP-binding</keyword>
<keyword id="KW-0378">Hydrolase</keyword>
<keyword id="KW-0460">Magnesium</keyword>
<keyword id="KW-0479">Metal-binding</keyword>
<keyword id="KW-0547">Nucleotide-binding</keyword>
<keyword id="KW-0630">Potassium</keyword>
<keyword id="KW-1185">Reference proteome</keyword>
<keyword id="KW-0819">tRNA processing</keyword>
<dbReference type="EC" id="3.6.-.-" evidence="1"/>
<dbReference type="EMBL" id="CP000270">
    <property type="protein sequence ID" value="ABE32962.1"/>
    <property type="molecule type" value="Genomic_DNA"/>
</dbReference>
<dbReference type="RefSeq" id="WP_011490355.1">
    <property type="nucleotide sequence ID" value="NC_007951.1"/>
</dbReference>
<dbReference type="SMR" id="Q13SH7"/>
<dbReference type="STRING" id="266265.Bxe_A4469"/>
<dbReference type="KEGG" id="bxb:DR64_2140"/>
<dbReference type="KEGG" id="bxe:Bxe_A4469"/>
<dbReference type="PATRIC" id="fig|266265.5.peg.4653"/>
<dbReference type="eggNOG" id="COG0486">
    <property type="taxonomic scope" value="Bacteria"/>
</dbReference>
<dbReference type="OrthoDB" id="9805918at2"/>
<dbReference type="Proteomes" id="UP000001817">
    <property type="component" value="Chromosome 1"/>
</dbReference>
<dbReference type="GO" id="GO:0005829">
    <property type="term" value="C:cytosol"/>
    <property type="evidence" value="ECO:0007669"/>
    <property type="project" value="TreeGrafter"/>
</dbReference>
<dbReference type="GO" id="GO:0005525">
    <property type="term" value="F:GTP binding"/>
    <property type="evidence" value="ECO:0007669"/>
    <property type="project" value="UniProtKB-UniRule"/>
</dbReference>
<dbReference type="GO" id="GO:0003924">
    <property type="term" value="F:GTPase activity"/>
    <property type="evidence" value="ECO:0007669"/>
    <property type="project" value="UniProtKB-UniRule"/>
</dbReference>
<dbReference type="GO" id="GO:0046872">
    <property type="term" value="F:metal ion binding"/>
    <property type="evidence" value="ECO:0007669"/>
    <property type="project" value="UniProtKB-KW"/>
</dbReference>
<dbReference type="GO" id="GO:0030488">
    <property type="term" value="P:tRNA methylation"/>
    <property type="evidence" value="ECO:0007669"/>
    <property type="project" value="TreeGrafter"/>
</dbReference>
<dbReference type="GO" id="GO:0002098">
    <property type="term" value="P:tRNA wobble uridine modification"/>
    <property type="evidence" value="ECO:0007669"/>
    <property type="project" value="TreeGrafter"/>
</dbReference>
<dbReference type="CDD" id="cd04164">
    <property type="entry name" value="trmE"/>
    <property type="match status" value="1"/>
</dbReference>
<dbReference type="CDD" id="cd14858">
    <property type="entry name" value="TrmE_N"/>
    <property type="match status" value="1"/>
</dbReference>
<dbReference type="Gene3D" id="3.40.50.300">
    <property type="entry name" value="P-loop containing nucleotide triphosphate hydrolases"/>
    <property type="match status" value="1"/>
</dbReference>
<dbReference type="Gene3D" id="3.30.1360.120">
    <property type="entry name" value="Probable tRNA modification gtpase trme, domain 1"/>
    <property type="match status" value="1"/>
</dbReference>
<dbReference type="Gene3D" id="1.20.120.430">
    <property type="entry name" value="tRNA modification GTPase MnmE domain 2"/>
    <property type="match status" value="1"/>
</dbReference>
<dbReference type="HAMAP" id="MF_00379">
    <property type="entry name" value="GTPase_MnmE"/>
    <property type="match status" value="1"/>
</dbReference>
<dbReference type="InterPro" id="IPR031168">
    <property type="entry name" value="G_TrmE"/>
</dbReference>
<dbReference type="InterPro" id="IPR006073">
    <property type="entry name" value="GTP-bd"/>
</dbReference>
<dbReference type="InterPro" id="IPR018948">
    <property type="entry name" value="GTP-bd_TrmE_N"/>
</dbReference>
<dbReference type="InterPro" id="IPR004520">
    <property type="entry name" value="GTPase_MnmE"/>
</dbReference>
<dbReference type="InterPro" id="IPR027368">
    <property type="entry name" value="MnmE_dom2"/>
</dbReference>
<dbReference type="InterPro" id="IPR025867">
    <property type="entry name" value="MnmE_helical"/>
</dbReference>
<dbReference type="InterPro" id="IPR027417">
    <property type="entry name" value="P-loop_NTPase"/>
</dbReference>
<dbReference type="InterPro" id="IPR005225">
    <property type="entry name" value="Small_GTP-bd"/>
</dbReference>
<dbReference type="InterPro" id="IPR027266">
    <property type="entry name" value="TrmE/GcvT_dom1"/>
</dbReference>
<dbReference type="NCBIfam" id="TIGR00450">
    <property type="entry name" value="mnmE_trmE_thdF"/>
    <property type="match status" value="1"/>
</dbReference>
<dbReference type="NCBIfam" id="NF003661">
    <property type="entry name" value="PRK05291.1-3"/>
    <property type="match status" value="1"/>
</dbReference>
<dbReference type="NCBIfam" id="TIGR00231">
    <property type="entry name" value="small_GTP"/>
    <property type="match status" value="1"/>
</dbReference>
<dbReference type="PANTHER" id="PTHR42714">
    <property type="entry name" value="TRNA MODIFICATION GTPASE GTPBP3"/>
    <property type="match status" value="1"/>
</dbReference>
<dbReference type="PANTHER" id="PTHR42714:SF2">
    <property type="entry name" value="TRNA MODIFICATION GTPASE GTPBP3, MITOCHONDRIAL"/>
    <property type="match status" value="1"/>
</dbReference>
<dbReference type="Pfam" id="PF01926">
    <property type="entry name" value="MMR_HSR1"/>
    <property type="match status" value="1"/>
</dbReference>
<dbReference type="Pfam" id="PF12631">
    <property type="entry name" value="MnmE_helical"/>
    <property type="match status" value="1"/>
</dbReference>
<dbReference type="Pfam" id="PF10396">
    <property type="entry name" value="TrmE_N"/>
    <property type="match status" value="1"/>
</dbReference>
<dbReference type="PRINTS" id="PR00326">
    <property type="entry name" value="GTP1OBG"/>
</dbReference>
<dbReference type="SUPFAM" id="SSF52540">
    <property type="entry name" value="P-loop containing nucleoside triphosphate hydrolases"/>
    <property type="match status" value="1"/>
</dbReference>
<dbReference type="PROSITE" id="PS51709">
    <property type="entry name" value="G_TRME"/>
    <property type="match status" value="1"/>
</dbReference>
<protein>
    <recommendedName>
        <fullName evidence="1">tRNA modification GTPase MnmE</fullName>
        <ecNumber evidence="1">3.6.-.-</ecNumber>
    </recommendedName>
</protein>
<gene>
    <name evidence="1" type="primary">mnmE</name>
    <name evidence="1" type="synonym">trmE</name>
    <name type="ordered locus">Bxeno_A4424</name>
    <name type="ORF">Bxe_A4469</name>
</gene>
<reference key="1">
    <citation type="journal article" date="2006" name="Proc. Natl. Acad. Sci. U.S.A.">
        <title>Burkholderia xenovorans LB400 harbors a multi-replicon, 9.73-Mbp genome shaped for versatility.</title>
        <authorList>
            <person name="Chain P.S.G."/>
            <person name="Denef V.J."/>
            <person name="Konstantinidis K.T."/>
            <person name="Vergez L.M."/>
            <person name="Agullo L."/>
            <person name="Reyes V.L."/>
            <person name="Hauser L."/>
            <person name="Cordova M."/>
            <person name="Gomez L."/>
            <person name="Gonzalez M."/>
            <person name="Land M."/>
            <person name="Lao V."/>
            <person name="Larimer F."/>
            <person name="LiPuma J.J."/>
            <person name="Mahenthiralingam E."/>
            <person name="Malfatti S.A."/>
            <person name="Marx C.J."/>
            <person name="Parnell J.J."/>
            <person name="Ramette A."/>
            <person name="Richardson P."/>
            <person name="Seeger M."/>
            <person name="Smith D."/>
            <person name="Spilker T."/>
            <person name="Sul W.J."/>
            <person name="Tsoi T.V."/>
            <person name="Ulrich L.E."/>
            <person name="Zhulin I.B."/>
            <person name="Tiedje J.M."/>
        </authorList>
    </citation>
    <scope>NUCLEOTIDE SEQUENCE [LARGE SCALE GENOMIC DNA]</scope>
    <source>
        <strain>LB400</strain>
    </source>
</reference>
<feature type="chain" id="PRO_0000345751" description="tRNA modification GTPase MnmE">
    <location>
        <begin position="1"/>
        <end position="464"/>
    </location>
</feature>
<feature type="domain" description="TrmE-type G">
    <location>
        <begin position="226"/>
        <end position="386"/>
    </location>
</feature>
<feature type="binding site" evidence="1">
    <location>
        <position position="25"/>
    </location>
    <ligand>
        <name>(6S)-5-formyl-5,6,7,8-tetrahydrofolate</name>
        <dbReference type="ChEBI" id="CHEBI:57457"/>
    </ligand>
</feature>
<feature type="binding site" evidence="1">
    <location>
        <position position="87"/>
    </location>
    <ligand>
        <name>(6S)-5-formyl-5,6,7,8-tetrahydrofolate</name>
        <dbReference type="ChEBI" id="CHEBI:57457"/>
    </ligand>
</feature>
<feature type="binding site" evidence="1">
    <location>
        <position position="130"/>
    </location>
    <ligand>
        <name>(6S)-5-formyl-5,6,7,8-tetrahydrofolate</name>
        <dbReference type="ChEBI" id="CHEBI:57457"/>
    </ligand>
</feature>
<feature type="binding site" evidence="1">
    <location>
        <begin position="236"/>
        <end position="241"/>
    </location>
    <ligand>
        <name>GTP</name>
        <dbReference type="ChEBI" id="CHEBI:37565"/>
    </ligand>
</feature>
<feature type="binding site" evidence="1">
    <location>
        <position position="236"/>
    </location>
    <ligand>
        <name>K(+)</name>
        <dbReference type="ChEBI" id="CHEBI:29103"/>
    </ligand>
</feature>
<feature type="binding site" evidence="1">
    <location>
        <position position="240"/>
    </location>
    <ligand>
        <name>Mg(2+)</name>
        <dbReference type="ChEBI" id="CHEBI:18420"/>
    </ligand>
</feature>
<feature type="binding site" evidence="1">
    <location>
        <begin position="255"/>
        <end position="261"/>
    </location>
    <ligand>
        <name>GTP</name>
        <dbReference type="ChEBI" id="CHEBI:37565"/>
    </ligand>
</feature>
<feature type="binding site" evidence="1">
    <location>
        <position position="255"/>
    </location>
    <ligand>
        <name>K(+)</name>
        <dbReference type="ChEBI" id="CHEBI:29103"/>
    </ligand>
</feature>
<feature type="binding site" evidence="1">
    <location>
        <position position="257"/>
    </location>
    <ligand>
        <name>K(+)</name>
        <dbReference type="ChEBI" id="CHEBI:29103"/>
    </ligand>
</feature>
<feature type="binding site" evidence="1">
    <location>
        <position position="260"/>
    </location>
    <ligand>
        <name>K(+)</name>
        <dbReference type="ChEBI" id="CHEBI:29103"/>
    </ligand>
</feature>
<feature type="binding site" evidence="1">
    <location>
        <position position="261"/>
    </location>
    <ligand>
        <name>Mg(2+)</name>
        <dbReference type="ChEBI" id="CHEBI:18420"/>
    </ligand>
</feature>
<feature type="binding site" evidence="1">
    <location>
        <begin position="280"/>
        <end position="283"/>
    </location>
    <ligand>
        <name>GTP</name>
        <dbReference type="ChEBI" id="CHEBI:37565"/>
    </ligand>
</feature>
<feature type="binding site" evidence="1">
    <location>
        <position position="464"/>
    </location>
    <ligand>
        <name>(6S)-5-formyl-5,6,7,8-tetrahydrofolate</name>
        <dbReference type="ChEBI" id="CHEBI:57457"/>
    </ligand>
</feature>